<comment type="function">
    <text>Receptor on natural killer (NK) cells for class I MHC.</text>
</comment>
<comment type="subunit">
    <text evidence="3">Homodimer; disulfide-linked.</text>
</comment>
<comment type="subcellular location">
    <subcellularLocation>
        <location>Membrane</location>
        <topology>Single-pass type II membrane protein</topology>
    </subcellularLocation>
</comment>
<comment type="alternative products">
    <event type="alternative splicing"/>
    <isoform>
        <id>Q60654-1</id>
        <name>Ly-49G.1</name>
        <sequence type="displayed"/>
    </isoform>
    <isoform>
        <id>Q60654-2</id>
        <name>Ly-49G.2</name>
        <sequence type="described" ref="VSP_003070"/>
    </isoform>
    <isoform>
        <id>Q60654-3</id>
        <name>Ly-49G.3</name>
        <sequence type="described" ref="VSP_003069"/>
    </isoform>
</comment>
<organism>
    <name type="scientific">Mus musculus</name>
    <name type="common">Mouse</name>
    <dbReference type="NCBI Taxonomy" id="10090"/>
    <lineage>
        <taxon>Eukaryota</taxon>
        <taxon>Metazoa</taxon>
        <taxon>Chordata</taxon>
        <taxon>Craniata</taxon>
        <taxon>Vertebrata</taxon>
        <taxon>Euteleostomi</taxon>
        <taxon>Mammalia</taxon>
        <taxon>Eutheria</taxon>
        <taxon>Euarchontoglires</taxon>
        <taxon>Glires</taxon>
        <taxon>Rodentia</taxon>
        <taxon>Myomorpha</taxon>
        <taxon>Muroidea</taxon>
        <taxon>Muridae</taxon>
        <taxon>Murinae</taxon>
        <taxon>Mus</taxon>
        <taxon>Mus</taxon>
    </lineage>
</organism>
<keyword id="KW-0002">3D-structure</keyword>
<keyword id="KW-0025">Alternative splicing</keyword>
<keyword id="KW-0130">Cell adhesion</keyword>
<keyword id="KW-1015">Disulfide bond</keyword>
<keyword id="KW-0325">Glycoprotein</keyword>
<keyword id="KW-0430">Lectin</keyword>
<keyword id="KW-0472">Membrane</keyword>
<keyword id="KW-0675">Receptor</keyword>
<keyword id="KW-1185">Reference proteome</keyword>
<keyword id="KW-0735">Signal-anchor</keyword>
<keyword id="KW-0812">Transmembrane</keyword>
<keyword id="KW-1133">Transmembrane helix</keyword>
<proteinExistence type="evidence at protein level"/>
<reference key="1">
    <citation type="journal article" date="1994" name="J. Immunol.">
        <title>Ly-49 multigene family expressed by IL-2-activated NK cells.</title>
        <authorList>
            <person name="Smith H.R.C."/>
            <person name="Karlhofer F.M."/>
            <person name="Yokoyama W.M."/>
        </authorList>
    </citation>
    <scope>NUCLEOTIDE SEQUENCE [MRNA]</scope>
    <source>
        <strain>C57BL/6J</strain>
        <tissue>Spleen</tissue>
    </source>
</reference>
<reference key="2">
    <citation type="journal article" date="1994" name="J. Exp. Med.">
        <title>Expression of different members of the Ly-49 gene family defines distinct natural killer cell subsets and cell adhesion properties.</title>
        <authorList>
            <person name="Brennan J."/>
            <person name="Mager D."/>
            <person name="Jefferies W."/>
            <person name="Takei F."/>
        </authorList>
    </citation>
    <scope>NUCLEOTIDE SEQUENCE [MRNA] (ISOFORM LY-49G.2)</scope>
    <source>
        <strain>B10.A</strain>
    </source>
</reference>
<reference key="3">
    <citation type="journal article" date="2008" name="J. Biol. Chem.">
        <title>Molecular architecture of the major histocompatibility complex class I-binding site of Ly49 natural killer cell receptors.</title>
        <authorList>
            <person name="Deng L."/>
            <person name="Cho S."/>
            <person name="Malchiodi E.L."/>
            <person name="Kerzic M.C."/>
            <person name="Dam J."/>
            <person name="Mariuzza R.A."/>
        </authorList>
    </citation>
    <scope>X-RAY CRYSTALLOGRAPHY (2.6 ANGSTROMS) OF 156-280</scope>
    <scope>SUBUNIT</scope>
    <scope>DISULFIDE BONDS</scope>
</reference>
<gene>
    <name type="primary">Klra7</name>
    <name type="synonym">Ly-49g</name>
    <name type="synonym">Ly49-g</name>
    <name type="synonym">Ly49g</name>
    <name type="synonym">Ly49g4</name>
</gene>
<accession>Q60654</accession>
<accession>Q60655</accession>
<accession>Q60656</accession>
<accession>Q60683</accession>
<evidence type="ECO:0000255" key="1"/>
<evidence type="ECO:0000255" key="2">
    <source>
        <dbReference type="PROSITE-ProRule" id="PRU00040"/>
    </source>
</evidence>
<evidence type="ECO:0000269" key="3">
    <source>
    </source>
</evidence>
<evidence type="ECO:0000303" key="4">
    <source>
    </source>
</evidence>
<evidence type="ECO:0000305" key="5"/>
<evidence type="ECO:0007829" key="6">
    <source>
        <dbReference type="PDB" id="3CAD"/>
    </source>
</evidence>
<name>KLRA7_MOUSE</name>
<protein>
    <recommendedName>
        <fullName>Killer cell lectin-like receptor 7</fullName>
    </recommendedName>
    <alternativeName>
        <fullName>Lymphocyte antigen 49g</fullName>
        <shortName>Ly-49g</shortName>
    </alternativeName>
    <alternativeName>
        <fullName>T-cell surface glycoprotein Ly-49G</fullName>
    </alternativeName>
</protein>
<dbReference type="EMBL" id="U10093">
    <property type="protein sequence ID" value="AAA50221.1"/>
    <property type="molecule type" value="mRNA"/>
</dbReference>
<dbReference type="EMBL" id="U10094">
    <property type="protein sequence ID" value="AAA50222.1"/>
    <property type="molecule type" value="mRNA"/>
</dbReference>
<dbReference type="EMBL" id="U10095">
    <property type="protein sequence ID" value="AAA50223.1"/>
    <property type="molecule type" value="mRNA"/>
</dbReference>
<dbReference type="EMBL" id="U12890">
    <property type="protein sequence ID" value="AAA58705.1"/>
    <property type="molecule type" value="mRNA"/>
</dbReference>
<dbReference type="CCDS" id="CCDS39668.1">
    <molecule id="Q60654-2"/>
</dbReference>
<dbReference type="CCDS" id="CCDS51928.1">
    <molecule id="Q60654-1"/>
</dbReference>
<dbReference type="PIR" id="I49052">
    <property type="entry name" value="I49052"/>
</dbReference>
<dbReference type="PIR" id="I49053">
    <property type="entry name" value="I49053"/>
</dbReference>
<dbReference type="PIR" id="I49054">
    <property type="entry name" value="I49054"/>
</dbReference>
<dbReference type="RefSeq" id="NP_001103793.1">
    <property type="nucleotide sequence ID" value="NM_001110323.1"/>
</dbReference>
<dbReference type="RefSeq" id="NP_055009.5">
    <molecule id="Q60654-2"/>
    <property type="nucleotide sequence ID" value="NM_014194.5"/>
</dbReference>
<dbReference type="PDB" id="3CAD">
    <property type="method" value="X-ray"/>
    <property type="resolution" value="2.60 A"/>
    <property type="chains" value="A/B=156-280"/>
</dbReference>
<dbReference type="PDBsum" id="3CAD"/>
<dbReference type="SMR" id="Q60654"/>
<dbReference type="FunCoup" id="Q60654">
    <property type="interactions" value="456"/>
</dbReference>
<dbReference type="STRING" id="10090.ENSMUSP00000107644"/>
<dbReference type="GlyCosmos" id="Q60654">
    <property type="glycosylation" value="2 sites, No reported glycans"/>
</dbReference>
<dbReference type="GlyGen" id="Q60654">
    <property type="glycosylation" value="2 sites"/>
</dbReference>
<dbReference type="PaxDb" id="10090-ENSMUSP00000032286"/>
<dbReference type="ProteomicsDB" id="265007">
    <molecule id="Q60654-1"/>
</dbReference>
<dbReference type="ProteomicsDB" id="265008">
    <molecule id="Q60654-2"/>
</dbReference>
<dbReference type="ProteomicsDB" id="265009">
    <molecule id="Q60654-3"/>
</dbReference>
<dbReference type="DNASU" id="16638"/>
<dbReference type="Ensembl" id="ENSMUST00000049304.14">
    <molecule id="Q60654-2"/>
    <property type="protein sequence ID" value="ENSMUSP00000037917.8"/>
    <property type="gene ID" value="ENSMUSG00000067599.14"/>
</dbReference>
<dbReference type="Ensembl" id="ENSMUST00000088011.11">
    <molecule id="Q60654-2"/>
    <property type="protein sequence ID" value="ENSMUSP00000085326.5"/>
    <property type="gene ID" value="ENSMUSG00000067599.14"/>
</dbReference>
<dbReference type="GeneID" id="16638"/>
<dbReference type="KEGG" id="mmu:16638"/>
<dbReference type="UCSC" id="uc009ehx.2">
    <molecule id="Q60654-2"/>
    <property type="organism name" value="mouse"/>
</dbReference>
<dbReference type="AGR" id="MGI:101901"/>
<dbReference type="CTD" id="16638"/>
<dbReference type="MGI" id="MGI:101901">
    <property type="gene designation" value="Klra7"/>
</dbReference>
<dbReference type="VEuPathDB" id="HostDB:ENSMUSG00000067599"/>
<dbReference type="eggNOG" id="KOG4297">
    <property type="taxonomic scope" value="Eukaryota"/>
</dbReference>
<dbReference type="GeneTree" id="ENSGT00390000008117"/>
<dbReference type="InParanoid" id="Q60654"/>
<dbReference type="OMA" id="GVSCYYF"/>
<dbReference type="OrthoDB" id="2142683at2759"/>
<dbReference type="PhylomeDB" id="Q60654"/>
<dbReference type="BioGRID-ORCS" id="16638">
    <property type="hits" value="1 hit in 75 CRISPR screens"/>
</dbReference>
<dbReference type="ChiTaRS" id="Klra7">
    <property type="organism name" value="mouse"/>
</dbReference>
<dbReference type="EvolutionaryTrace" id="Q60654"/>
<dbReference type="PRO" id="PR:Q60654"/>
<dbReference type="Proteomes" id="UP000000589">
    <property type="component" value="Chromosome 6"/>
</dbReference>
<dbReference type="RNAct" id="Q60654">
    <property type="molecule type" value="protein"/>
</dbReference>
<dbReference type="Bgee" id="ENSMUSG00000067599">
    <property type="expression patterns" value="Expressed in blood and 61 other cell types or tissues"/>
</dbReference>
<dbReference type="ExpressionAtlas" id="Q60654">
    <property type="expression patterns" value="baseline and differential"/>
</dbReference>
<dbReference type="GO" id="GO:0009897">
    <property type="term" value="C:external side of plasma membrane"/>
    <property type="evidence" value="ECO:0000314"/>
    <property type="project" value="MGI"/>
</dbReference>
<dbReference type="GO" id="GO:0005886">
    <property type="term" value="C:plasma membrane"/>
    <property type="evidence" value="ECO:0000304"/>
    <property type="project" value="MGI"/>
</dbReference>
<dbReference type="GO" id="GO:0030246">
    <property type="term" value="F:carbohydrate binding"/>
    <property type="evidence" value="ECO:0007669"/>
    <property type="project" value="UniProtKB-KW"/>
</dbReference>
<dbReference type="GO" id="GO:0007155">
    <property type="term" value="P:cell adhesion"/>
    <property type="evidence" value="ECO:0007669"/>
    <property type="project" value="UniProtKB-KW"/>
</dbReference>
<dbReference type="CDD" id="cd03593">
    <property type="entry name" value="CLECT_NK_receptors_like"/>
    <property type="match status" value="1"/>
</dbReference>
<dbReference type="FunFam" id="3.10.100.10:FF:000053">
    <property type="entry name" value="Killer cell lectin-like receptor 3"/>
    <property type="match status" value="1"/>
</dbReference>
<dbReference type="Gene3D" id="3.10.100.10">
    <property type="entry name" value="Mannose-Binding Protein A, subunit A"/>
    <property type="match status" value="1"/>
</dbReference>
<dbReference type="InterPro" id="IPR001304">
    <property type="entry name" value="C-type_lectin-like"/>
</dbReference>
<dbReference type="InterPro" id="IPR016186">
    <property type="entry name" value="C-type_lectin-like/link_sf"/>
</dbReference>
<dbReference type="InterPro" id="IPR016187">
    <property type="entry name" value="CTDL_fold"/>
</dbReference>
<dbReference type="InterPro" id="IPR013600">
    <property type="entry name" value="Ly49_N"/>
</dbReference>
<dbReference type="InterPro" id="IPR052013">
    <property type="entry name" value="Mouse_KLRs"/>
</dbReference>
<dbReference type="InterPro" id="IPR033992">
    <property type="entry name" value="NKR-like_CTLD"/>
</dbReference>
<dbReference type="PANTHER" id="PTHR46329">
    <property type="entry name" value="KILLER CELL LECTIN-LIKE RECEPTOR 2"/>
    <property type="match status" value="1"/>
</dbReference>
<dbReference type="PANTHER" id="PTHR46329:SF6">
    <property type="entry name" value="KILLER CELL LECTIN-LIKE RECEPTOR 4-RELATED"/>
    <property type="match status" value="1"/>
</dbReference>
<dbReference type="Pfam" id="PF00059">
    <property type="entry name" value="Lectin_C"/>
    <property type="match status" value="1"/>
</dbReference>
<dbReference type="Pfam" id="PF08391">
    <property type="entry name" value="Ly49"/>
    <property type="match status" value="1"/>
</dbReference>
<dbReference type="SMART" id="SM00034">
    <property type="entry name" value="CLECT"/>
    <property type="match status" value="1"/>
</dbReference>
<dbReference type="SUPFAM" id="SSF56436">
    <property type="entry name" value="C-type lectin-like"/>
    <property type="match status" value="1"/>
</dbReference>
<dbReference type="PROSITE" id="PS50041">
    <property type="entry name" value="C_TYPE_LECTIN_2"/>
    <property type="match status" value="1"/>
</dbReference>
<sequence>MSEQEVTYSTVRFHESSRLQKLVRTEEPQRPREACYREYSVPWKLIVIACGILCFLLLVTVALLAITIFQHSQQKHELQETLNCHDNCSPTQSDVNLKDELLRNKSIECRPGNDLLESLSRDQNRWYSETKTFSDSSQHTGVHERPISKAEGKGRGFEKYWFCYGIKCYYFNMDRKTWSGCKQTCQISSLSLLKIDNEDELKFLQNLAPSDISWIGLSYDNKKKDWVWIDNGPSKLALNTTKYNIRDGLCMSLSKTRLDNGDCDKSYICICGKRLDKFPH</sequence>
<feature type="chain" id="PRO_0000046685" description="Killer cell lectin-like receptor 7">
    <location>
        <begin position="1"/>
        <end position="280"/>
    </location>
</feature>
<feature type="topological domain" description="Cytoplasmic" evidence="1">
    <location>
        <begin position="1"/>
        <end position="44"/>
    </location>
</feature>
<feature type="transmembrane region" description="Helical; Signal-anchor for type II membrane protein" evidence="1">
    <location>
        <begin position="45"/>
        <end position="66"/>
    </location>
</feature>
<feature type="topological domain" description="Extracellular" evidence="1">
    <location>
        <begin position="67"/>
        <end position="280"/>
    </location>
</feature>
<feature type="domain" description="C-type lectin" evidence="2">
    <location>
        <begin position="156"/>
        <end position="275"/>
    </location>
</feature>
<feature type="glycosylation site" description="N-linked (GlcNAc...) asparagine" evidence="1">
    <location>
        <position position="104"/>
    </location>
</feature>
<feature type="glycosylation site" description="N-linked (GlcNAc...) asparagine" evidence="1">
    <location>
        <position position="239"/>
    </location>
</feature>
<feature type="disulfide bond" evidence="2 3">
    <location>
        <begin position="163"/>
        <end position="168"/>
    </location>
</feature>
<feature type="disulfide bond" evidence="2 3">
    <location>
        <begin position="181"/>
        <end position="269"/>
    </location>
</feature>
<feature type="disulfide bond" evidence="2 3">
    <location>
        <begin position="185"/>
        <end position="271"/>
    </location>
</feature>
<feature type="disulfide bond" evidence="2 3">
    <location>
        <begin position="250"/>
        <end position="263"/>
    </location>
</feature>
<feature type="splice variant" id="VSP_003069" description="In isoform Ly-49G.3." evidence="5">
    <location>
        <begin position="117"/>
        <end position="193"/>
    </location>
</feature>
<feature type="splice variant" id="VSP_003070" description="In isoform Ly-49G.2." evidence="4">
    <location>
        <begin position="142"/>
        <end position="154"/>
    </location>
</feature>
<feature type="sequence conflict" description="In Ref. 2; AAA58705." evidence="5" ref="2">
    <original>K</original>
    <variation>Q</variation>
    <location>
        <position position="44"/>
    </location>
</feature>
<feature type="strand" evidence="6">
    <location>
        <begin position="160"/>
        <end position="164"/>
    </location>
</feature>
<feature type="strand" evidence="6">
    <location>
        <begin position="167"/>
        <end position="176"/>
    </location>
</feature>
<feature type="helix" evidence="6">
    <location>
        <begin position="178"/>
        <end position="186"/>
    </location>
</feature>
<feature type="turn" evidence="6">
    <location>
        <begin position="187"/>
        <end position="189"/>
    </location>
</feature>
<feature type="helix" evidence="6">
    <location>
        <begin position="201"/>
        <end position="207"/>
    </location>
</feature>
<feature type="strand" evidence="6">
    <location>
        <begin position="213"/>
        <end position="220"/>
    </location>
</feature>
<feature type="turn" evidence="6">
    <location>
        <begin position="221"/>
        <end position="224"/>
    </location>
</feature>
<feature type="strand" evidence="6">
    <location>
        <begin position="225"/>
        <end position="228"/>
    </location>
</feature>
<feature type="turn" evidence="6">
    <location>
        <begin position="245"/>
        <end position="247"/>
    </location>
</feature>
<feature type="strand" evidence="6">
    <location>
        <begin position="249"/>
        <end position="252"/>
    </location>
</feature>
<feature type="strand" evidence="6">
    <location>
        <begin position="267"/>
        <end position="274"/>
    </location>
</feature>